<proteinExistence type="inferred from homology"/>
<sequence>MSITAKSVYRDAGNFFRNQFITILLVSLLCAFITVVLGHAFSPSDAQIAQLSEGEHLAGSAGLFELVQNMTPEQQQILLRASAASTFSGLIGNAILAGGIILMIQLVSAGHRVSALRAIGASAPALPKLFILIFLTTLLVQIGIMLIVVPGIIMAIVLALAPVMLVEEKMGVFAAMRSSMRLAWANMRLVAPAVIGWLLAKTLLLLFAPSFAVLTPNVGAVLANTLSNLISAVLLIYLFRLYMLIRQ</sequence>
<name>YCIC_SALPA</name>
<organism>
    <name type="scientific">Salmonella paratyphi A (strain ATCC 9150 / SARB42)</name>
    <dbReference type="NCBI Taxonomy" id="295319"/>
    <lineage>
        <taxon>Bacteria</taxon>
        <taxon>Pseudomonadati</taxon>
        <taxon>Pseudomonadota</taxon>
        <taxon>Gammaproteobacteria</taxon>
        <taxon>Enterobacterales</taxon>
        <taxon>Enterobacteriaceae</taxon>
        <taxon>Salmonella</taxon>
    </lineage>
</organism>
<protein>
    <recommendedName>
        <fullName evidence="1">UPF0259 membrane protein YciC</fullName>
    </recommendedName>
</protein>
<keyword id="KW-0997">Cell inner membrane</keyword>
<keyword id="KW-1003">Cell membrane</keyword>
<keyword id="KW-0472">Membrane</keyword>
<keyword id="KW-0812">Transmembrane</keyword>
<keyword id="KW-1133">Transmembrane helix</keyword>
<evidence type="ECO:0000255" key="1">
    <source>
        <dbReference type="HAMAP-Rule" id="MF_01067"/>
    </source>
</evidence>
<accession>Q5PD19</accession>
<comment type="subcellular location">
    <subcellularLocation>
        <location evidence="1">Cell inner membrane</location>
        <topology evidence="1">Multi-pass membrane protein</topology>
    </subcellularLocation>
</comment>
<comment type="similarity">
    <text evidence="1">Belongs to the UPF0259 family.</text>
</comment>
<gene>
    <name evidence="1" type="primary">yciC</name>
    <name type="ordered locus">SPA1143</name>
</gene>
<feature type="chain" id="PRO_1000064530" description="UPF0259 membrane protein YciC">
    <location>
        <begin position="1"/>
        <end position="247"/>
    </location>
</feature>
<feature type="transmembrane region" description="Helical" evidence="1">
    <location>
        <begin position="20"/>
        <end position="40"/>
    </location>
</feature>
<feature type="transmembrane region" description="Helical" evidence="1">
    <location>
        <begin position="87"/>
        <end position="107"/>
    </location>
</feature>
<feature type="transmembrane region" description="Helical" evidence="1">
    <location>
        <begin position="118"/>
        <end position="140"/>
    </location>
</feature>
<feature type="transmembrane region" description="Helical" evidence="1">
    <location>
        <begin position="152"/>
        <end position="172"/>
    </location>
</feature>
<feature type="transmembrane region" description="Helical" evidence="1">
    <location>
        <begin position="194"/>
        <end position="214"/>
    </location>
</feature>
<feature type="transmembrane region" description="Helical" evidence="1">
    <location>
        <begin position="219"/>
        <end position="239"/>
    </location>
</feature>
<dbReference type="EMBL" id="CP000026">
    <property type="protein sequence ID" value="AAV77104.1"/>
    <property type="molecule type" value="Genomic_DNA"/>
</dbReference>
<dbReference type="RefSeq" id="WP_000028507.1">
    <property type="nucleotide sequence ID" value="NC_006511.1"/>
</dbReference>
<dbReference type="KEGG" id="spt:SPA1143"/>
<dbReference type="HOGENOM" id="CLU_073287_0_0_6"/>
<dbReference type="Proteomes" id="UP000008185">
    <property type="component" value="Chromosome"/>
</dbReference>
<dbReference type="GO" id="GO:0005886">
    <property type="term" value="C:plasma membrane"/>
    <property type="evidence" value="ECO:0007669"/>
    <property type="project" value="UniProtKB-SubCell"/>
</dbReference>
<dbReference type="HAMAP" id="MF_01067">
    <property type="entry name" value="UPF0259"/>
    <property type="match status" value="1"/>
</dbReference>
<dbReference type="InterPro" id="IPR009627">
    <property type="entry name" value="UPF0259"/>
</dbReference>
<dbReference type="NCBIfam" id="NF002774">
    <property type="entry name" value="PRK02868.1"/>
    <property type="match status" value="1"/>
</dbReference>
<dbReference type="Pfam" id="PF06790">
    <property type="entry name" value="UPF0259"/>
    <property type="match status" value="1"/>
</dbReference>
<reference key="1">
    <citation type="journal article" date="2004" name="Nat. Genet.">
        <title>Comparison of genome degradation in Paratyphi A and Typhi, human-restricted serovars of Salmonella enterica that cause typhoid.</title>
        <authorList>
            <person name="McClelland M."/>
            <person name="Sanderson K.E."/>
            <person name="Clifton S.W."/>
            <person name="Latreille P."/>
            <person name="Porwollik S."/>
            <person name="Sabo A."/>
            <person name="Meyer R."/>
            <person name="Bieri T."/>
            <person name="Ozersky P."/>
            <person name="McLellan M."/>
            <person name="Harkins C.R."/>
            <person name="Wang C."/>
            <person name="Nguyen C."/>
            <person name="Berghoff A."/>
            <person name="Elliott G."/>
            <person name="Kohlberg S."/>
            <person name="Strong C."/>
            <person name="Du F."/>
            <person name="Carter J."/>
            <person name="Kremizki C."/>
            <person name="Layman D."/>
            <person name="Leonard S."/>
            <person name="Sun H."/>
            <person name="Fulton L."/>
            <person name="Nash W."/>
            <person name="Miner T."/>
            <person name="Minx P."/>
            <person name="Delehaunty K."/>
            <person name="Fronick C."/>
            <person name="Magrini V."/>
            <person name="Nhan M."/>
            <person name="Warren W."/>
            <person name="Florea L."/>
            <person name="Spieth J."/>
            <person name="Wilson R.K."/>
        </authorList>
    </citation>
    <scope>NUCLEOTIDE SEQUENCE [LARGE SCALE GENOMIC DNA]</scope>
    <source>
        <strain>ATCC 9150 / SARB42</strain>
    </source>
</reference>